<name>ALT2B_EMCVR</name>
<organism>
    <name type="scientific">Encephalomyocarditis virus (strain Rueckert)</name>
    <name type="common">EMCV</name>
    <dbReference type="NCBI Taxonomy" id="2870365"/>
    <lineage>
        <taxon>Viruses</taxon>
        <taxon>Riboviria</taxon>
        <taxon>Orthornavirae</taxon>
        <taxon>Pisuviricota</taxon>
        <taxon>Pisoniviricetes</taxon>
        <taxon>Picornavirales</taxon>
        <taxon>Picornaviridae</taxon>
        <taxon>Caphthovirinae</taxon>
        <taxon>Cardiovirus</taxon>
        <taxon>Cardiovirus A</taxon>
    </lineage>
</organism>
<comment type="alternative products">
    <event type="ribosomal frameshifting"/>
    <isoform>
        <id>P0DJX6-1</id>
        <name>2B*</name>
        <sequence type="displayed"/>
    </isoform>
    <isoform>
        <id>Q66765-1</id>
        <name>Genome polyprotein</name>
        <sequence type="external"/>
    </isoform>
</comment>
<comment type="miscellaneous">
    <molecule>Isoform 2B*</molecule>
    <text evidence="1">Produced by -1 ribosomal frameshifting.</text>
</comment>
<comment type="similarity">
    <text evidence="3">Belongs to the encephalomyocarditis virus protein 2B* family.</text>
</comment>
<reference key="1">
    <citation type="journal article" date="1992" name="J. Virol.">
        <title>Sequence and structural elements that contribute to efficient encephalomyocarditis virus RNA translation.</title>
        <authorList>
            <person name="Duke G.M."/>
            <person name="Hoffman M.A."/>
            <person name="Palmenberg A.C."/>
        </authorList>
    </citation>
    <scope>NUCLEOTIDE SEQUENCE [GENOMIC RNA]</scope>
</reference>
<protein>
    <recommendedName>
        <fullName>Protein 2B*</fullName>
    </recommendedName>
</protein>
<accession>P0DJX6</accession>
<organismHost>
    <name type="scientific">Homo sapiens</name>
    <name type="common">Human</name>
    <dbReference type="NCBI Taxonomy" id="9606"/>
</organismHost>
<organismHost>
    <name type="scientific">Mus musculus</name>
    <name type="common">Mouse</name>
    <dbReference type="NCBI Taxonomy" id="10090"/>
</organismHost>
<organismHost>
    <name type="scientific">Sigmodon hispidus</name>
    <name type="common">Hispid cotton rat</name>
    <dbReference type="NCBI Taxonomy" id="42415"/>
</organismHost>
<organismHost>
    <name type="scientific">Sus scrofa</name>
    <name type="common">Pig</name>
    <dbReference type="NCBI Taxonomy" id="9823"/>
</organismHost>
<dbReference type="EMBL" id="M81861">
    <property type="status" value="NOT_ANNOTATED_CDS"/>
    <property type="molecule type" value="Genomic_RNA"/>
</dbReference>
<dbReference type="Proteomes" id="UP000002319">
    <property type="component" value="Genome"/>
</dbReference>
<dbReference type="GO" id="GO:0075523">
    <property type="term" value="P:viral translational frameshifting"/>
    <property type="evidence" value="ECO:0007669"/>
    <property type="project" value="UniProtKB-KW"/>
</dbReference>
<evidence type="ECO:0000250" key="1">
    <source>
        <dbReference type="UniProtKB" id="P0DJX8"/>
    </source>
</evidence>
<evidence type="ECO:0000256" key="2">
    <source>
        <dbReference type="SAM" id="MobiDB-lite"/>
    </source>
</evidence>
<evidence type="ECO:0000305" key="3"/>
<feature type="chain" id="PRO_0000423153" description="Protein 2B*">
    <location>
        <begin position="1"/>
        <end position="128"/>
    </location>
</feature>
<feature type="region of interest" description="Disordered" evidence="2">
    <location>
        <begin position="1"/>
        <end position="27"/>
    </location>
</feature>
<feature type="region of interest" description="Disordered" evidence="2">
    <location>
        <begin position="92"/>
        <end position="128"/>
    </location>
</feature>
<feature type="compositionally biased region" description="Polar residues" evidence="2">
    <location>
        <begin position="18"/>
        <end position="27"/>
    </location>
</feature>
<feature type="compositionally biased region" description="Basic and acidic residues" evidence="2">
    <location>
        <begin position="111"/>
        <end position="128"/>
    </location>
</feature>
<sequence length="128" mass="14449">PFMFRPRKQVFPDPRSGSVINGSNPTAERPCQQSYGISFYGFARCQRGRPKSNEDYKDIKFSIGCMGKCKRNTKQPRVLEAALEQMCAADCRDDNSSDASGPFDSALLRNIDGRRDYKPDKSVRRNSS</sequence>
<keyword id="KW-1185">Reference proteome</keyword>
<keyword id="KW-0688">Ribosomal frameshifting</keyword>
<proteinExistence type="inferred from homology"/>